<evidence type="ECO:0000255" key="1">
    <source>
        <dbReference type="PROSITE-ProRule" id="PRU01258"/>
    </source>
</evidence>
<organism>
    <name type="scientific">Glycine max</name>
    <name type="common">Soybean</name>
    <name type="synonym">Glycine hispida</name>
    <dbReference type="NCBI Taxonomy" id="3847"/>
    <lineage>
        <taxon>Eukaryota</taxon>
        <taxon>Viridiplantae</taxon>
        <taxon>Streptophyta</taxon>
        <taxon>Embryophyta</taxon>
        <taxon>Tracheophyta</taxon>
        <taxon>Spermatophyta</taxon>
        <taxon>Magnoliopsida</taxon>
        <taxon>eudicotyledons</taxon>
        <taxon>Gunneridae</taxon>
        <taxon>Pentapetalae</taxon>
        <taxon>rosids</taxon>
        <taxon>fabids</taxon>
        <taxon>Fabales</taxon>
        <taxon>Fabaceae</taxon>
        <taxon>Papilionoideae</taxon>
        <taxon>50 kb inversion clade</taxon>
        <taxon>NPAAA clade</taxon>
        <taxon>indigoferoid/millettioid clade</taxon>
        <taxon>Phaseoleae</taxon>
        <taxon>Glycine</taxon>
        <taxon>Glycine subgen. Soja</taxon>
    </lineage>
</organism>
<keyword id="KW-0326">Glycosidase</keyword>
<keyword id="KW-0378">Hydrolase</keyword>
<keyword id="KW-1185">Reference proteome</keyword>
<name>RUAP_SOYBN</name>
<feature type="chain" id="PRO_0000097529" description="RuBisCO-associated protein">
    <location>
        <begin position="1"/>
        <end position="283"/>
    </location>
</feature>
<feature type="domain" description="GH18" evidence="1">
    <location>
        <begin position="5"/>
        <end position="283"/>
    </location>
</feature>
<feature type="active site" description="Proton donor" evidence="1">
    <location>
        <position position="128"/>
    </location>
</feature>
<accession>P39657</accession>
<sequence length="283" mass="31259">MSTKFKVFREFTSDDSFLNQVIPENITEFQVTLSLARDYDGNNSTNGKFIPYWDTEKVTPEVIKKFKKKYEPTALRVKVLVSIGNKNKQFPFTIGSDSNSEAWVSEATASLKSIIKTYNLDGIDVSYEDIAANEADFVNSVGGLVRNLKQNKLITVASFATSADAANNKFYNLLYAEYATFFDTVVFLSWVGFTPSRANPVASLEEKILAVANEYKAVKAFLVAYSTVAEDWANFSPPIFFITLHGLLGNSAVKGASIKVISDATASFPAKWIPEILLLAASK</sequence>
<comment type="subunit">
    <text>Forms part of the RuBisCO complex.</text>
</comment>
<comment type="tissue specificity">
    <text>Leaves.</text>
</comment>
<comment type="induction">
    <text>By fruit removal.</text>
</comment>
<comment type="similarity">
    <text evidence="1">Belongs to the glycosyl hydrolase 18 family.</text>
</comment>
<reference key="1">
    <citation type="journal article" date="1994" name="Plant Physiol.">
        <title>cDNA sequence for the ribulose 1,5 bisphosphate carboxylase/oxygenase complex protein. A protein that accumulates in soybean leaves in response to fruit removal.</title>
        <authorList>
            <person name="Staswick P.E."/>
            <person name="Crafts-Brandner S.J."/>
            <person name="Salvucci M.E."/>
        </authorList>
    </citation>
    <scope>NUCLEOTIDE SEQUENCE [MRNA]</scope>
    <source>
        <tissue>Leaf</tissue>
    </source>
</reference>
<dbReference type="EMBL" id="L28804">
    <property type="protein sequence ID" value="AAA34007.1"/>
    <property type="molecule type" value="mRNA"/>
</dbReference>
<dbReference type="PIR" id="T07803">
    <property type="entry name" value="T07803"/>
</dbReference>
<dbReference type="RefSeq" id="NP_001236757.1">
    <property type="nucleotide sequence ID" value="NM_001249828.1"/>
</dbReference>
<dbReference type="SMR" id="P39657"/>
<dbReference type="STRING" id="3847.P39657"/>
<dbReference type="PaxDb" id="3847-GLYMA01G34300.1"/>
<dbReference type="EnsemblPlants" id="KRH76259">
    <property type="protein sequence ID" value="KRH76259"/>
    <property type="gene ID" value="GLYMA_01G142400"/>
</dbReference>
<dbReference type="GeneID" id="547969"/>
<dbReference type="Gramene" id="KRH76259">
    <property type="protein sequence ID" value="KRH76259"/>
    <property type="gene ID" value="GLYMA_01G142400"/>
</dbReference>
<dbReference type="KEGG" id="gmx:547969"/>
<dbReference type="HOGENOM" id="CLU_065258_1_0_1"/>
<dbReference type="InParanoid" id="P39657"/>
<dbReference type="OMA" id="DSNSEAW"/>
<dbReference type="OrthoDB" id="1423910at2759"/>
<dbReference type="Proteomes" id="UP000008827">
    <property type="component" value="Chromosome 1"/>
</dbReference>
<dbReference type="GO" id="GO:0016798">
    <property type="term" value="F:hydrolase activity, acting on glycosyl bonds"/>
    <property type="evidence" value="ECO:0007669"/>
    <property type="project" value="UniProtKB-KW"/>
</dbReference>
<dbReference type="GO" id="GO:0005975">
    <property type="term" value="P:carbohydrate metabolic process"/>
    <property type="evidence" value="ECO:0007669"/>
    <property type="project" value="InterPro"/>
</dbReference>
<dbReference type="Gene3D" id="3.20.20.80">
    <property type="entry name" value="Glycosidases"/>
    <property type="match status" value="1"/>
</dbReference>
<dbReference type="InterPro" id="IPR001223">
    <property type="entry name" value="Glyco_hydro18_cat"/>
</dbReference>
<dbReference type="InterPro" id="IPR017853">
    <property type="entry name" value="Glycoside_hydrolase_SF"/>
</dbReference>
<dbReference type="PANTHER" id="PTHR46476">
    <property type="entry name" value="CHITINASE 2-LIKE"/>
    <property type="match status" value="1"/>
</dbReference>
<dbReference type="PANTHER" id="PTHR46476:SF12">
    <property type="entry name" value="RUBISCO-ASSOCIATED PROTEIN"/>
    <property type="match status" value="1"/>
</dbReference>
<dbReference type="Pfam" id="PF00704">
    <property type="entry name" value="Glyco_hydro_18"/>
    <property type="match status" value="1"/>
</dbReference>
<dbReference type="SUPFAM" id="SSF51445">
    <property type="entry name" value="(Trans)glycosidases"/>
    <property type="match status" value="1"/>
</dbReference>
<dbReference type="PROSITE" id="PS51910">
    <property type="entry name" value="GH18_2"/>
    <property type="match status" value="1"/>
</dbReference>
<protein>
    <recommendedName>
        <fullName>RuBisCO-associated protein</fullName>
    </recommendedName>
</protein>
<proteinExistence type="evidence at transcript level"/>